<gene>
    <name type="primary">PCD1</name>
    <name type="ordered locus">YLR151C</name>
    <name type="ORF">L9634.8</name>
</gene>
<comment type="function">
    <text evidence="3 5">Diphosphatase (pyrophosphatase) with specificity for coenzyme A and CoA derivatives. Catalyzes the hydrolysis of the diphosphate linkage in CoA to give 3',5'-ADP and 4'-phosphopantetheine. Prefers oxidized CoA disulfide (CoASSCoA) over CoA as a substrate. May be required to remove potentially toxic oxidized CoA disulfide from peroxisomes to maintain the capacity for beta-oxidation of fatty acids (PubMed:10922370). Can also hydrolyze 8-oxo-dGTP and 2-OH-dATP in vitro; therefore it may function as a sanitizing enzyme for oxidized nucleotides and may contribute to prevention of spontaneous mutagenesis due to the misincorporation of these oxidized nucleotides during DNA synthesis (PubMed:15475388). Shows moderate activity in vitro with several short chain acyl-CoA esters and very low activity on 3'-dephospho-CoA while is not active with (deoxy)nucleoside 5'-triphosphates, nucleoside 5'-di- or monophosphates, diadenosine polyphosphates, nucleoside 5'-diphosphosugars, cytidine 5'-diphosphoalcohols, NAD(+), NADH, or FAD (PubMed:10922370).</text>
</comment>
<comment type="catalytic activity">
    <reaction evidence="3">
        <text>CoA + H2O = (R)-4'-phosphopantetheine + adenosine 3',5'-bisphosphate + 2 H(+)</text>
        <dbReference type="Rhea" id="RHEA:64988"/>
        <dbReference type="ChEBI" id="CHEBI:15377"/>
        <dbReference type="ChEBI" id="CHEBI:15378"/>
        <dbReference type="ChEBI" id="CHEBI:57287"/>
        <dbReference type="ChEBI" id="CHEBI:58343"/>
        <dbReference type="ChEBI" id="CHEBI:61723"/>
        <dbReference type="EC" id="3.6.1.77"/>
    </reaction>
    <physiologicalReaction direction="left-to-right" evidence="9">
        <dbReference type="Rhea" id="RHEA:64989"/>
    </physiologicalReaction>
</comment>
<comment type="catalytic activity">
    <reaction evidence="3">
        <text>CoA-disulfide + H2O = 4'-phosphopantetheinyl-CoA disulfide + adenosine 3',5'-bisphosphate + 2 H(+)</text>
        <dbReference type="Rhea" id="RHEA:75719"/>
        <dbReference type="ChEBI" id="CHEBI:15377"/>
        <dbReference type="ChEBI" id="CHEBI:15378"/>
        <dbReference type="ChEBI" id="CHEBI:58343"/>
        <dbReference type="ChEBI" id="CHEBI:62209"/>
        <dbReference type="ChEBI" id="CHEBI:194444"/>
    </reaction>
    <physiologicalReaction direction="left-to-right" evidence="9">
        <dbReference type="Rhea" id="RHEA:75720"/>
    </physiologicalReaction>
</comment>
<comment type="catalytic activity">
    <reaction evidence="5">
        <text>8-oxo-dGTP + H2O = 8-oxo-dGMP + diphosphate + H(+)</text>
        <dbReference type="Rhea" id="RHEA:31575"/>
        <dbReference type="ChEBI" id="CHEBI:15377"/>
        <dbReference type="ChEBI" id="CHEBI:15378"/>
        <dbReference type="ChEBI" id="CHEBI:33019"/>
        <dbReference type="ChEBI" id="CHEBI:63224"/>
        <dbReference type="ChEBI" id="CHEBI:77896"/>
    </reaction>
    <physiologicalReaction direction="left-to-right" evidence="10">
        <dbReference type="Rhea" id="RHEA:31576"/>
    </physiologicalReaction>
</comment>
<comment type="catalytic activity">
    <reaction evidence="5">
        <text>2-oxo-dATP + H2O = 2-oxo-dAMP + diphosphate + H(+)</text>
        <dbReference type="Rhea" id="RHEA:31583"/>
        <dbReference type="ChEBI" id="CHEBI:15377"/>
        <dbReference type="ChEBI" id="CHEBI:15378"/>
        <dbReference type="ChEBI" id="CHEBI:33019"/>
        <dbReference type="ChEBI" id="CHEBI:63212"/>
        <dbReference type="ChEBI" id="CHEBI:77897"/>
        <dbReference type="EC" id="3.6.1.56"/>
    </reaction>
    <physiologicalReaction direction="left-to-right" evidence="10">
        <dbReference type="Rhea" id="RHEA:31584"/>
    </physiologicalReaction>
</comment>
<comment type="cofactor">
    <cofactor evidence="3">
        <name>Mn(2+)</name>
        <dbReference type="ChEBI" id="CHEBI:29035"/>
    </cofactor>
    <cofactor evidence="3">
        <name>Mg(2+)</name>
        <dbReference type="ChEBI" id="CHEBI:18420"/>
    </cofactor>
</comment>
<comment type="biophysicochemical properties">
    <kinetics>
        <KM evidence="3">280 uM for CoA</KM>
        <KM evidence="3">24 uM for CoASSCoA</KM>
        <KM evidence="5">23.8 uM for 8-oxo-dGTP</KM>
        <text evidence="3 5">kcat is 4.6 sec(-1) with CoA as substrate (PubMed:10922370). kcat is 5.0 sec(-1) with CoASSCoA as substrate (PubMed:10922370). kcat is 0.133 sec(-1) with 8-oxo-dGTP as substrate using a GST-fused enzyme (PubMed:15475388).</text>
    </kinetics>
    <phDependence>
        <text evidence="3 5">Optimum pH is 7.0 for CoA hydrolysis (PubMed:10922370). Optimum pH is 8.0-8.5 for 8-oxo-dGTP hydrolysis (PubMed:15475388).</text>
    </phDependence>
</comment>
<comment type="subcellular location">
    <subcellularLocation>
        <location evidence="3">Peroxisome</location>
    </subcellularLocation>
</comment>
<comment type="PTM">
    <text evidence="3">The size of the cleaved transit peptide can be of 7 or 8 residues.</text>
</comment>
<comment type="disruption phenotype">
    <text evidence="5">The disruption of this gene causes 14-fold increase in the frequency of spontaneous mutation compared to the wild type.</text>
</comment>
<comment type="miscellaneous">
    <text evidence="4">Present with 238 molecules/cell in log phase SD medium.</text>
</comment>
<comment type="similarity">
    <text evidence="8">Belongs to the Nudix hydrolase family. PCD1 subfamily.</text>
</comment>
<evidence type="ECO:0000250" key="1"/>
<evidence type="ECO:0000255" key="2">
    <source>
        <dbReference type="PROSITE-ProRule" id="PRU00794"/>
    </source>
</evidence>
<evidence type="ECO:0000269" key="3">
    <source>
    </source>
</evidence>
<evidence type="ECO:0000269" key="4">
    <source>
    </source>
</evidence>
<evidence type="ECO:0000269" key="5">
    <source>
    </source>
</evidence>
<evidence type="ECO:0000303" key="6">
    <source>
    </source>
</evidence>
<evidence type="ECO:0000303" key="7">
    <source>
    </source>
</evidence>
<evidence type="ECO:0000305" key="8"/>
<evidence type="ECO:0000305" key="9">
    <source>
    </source>
</evidence>
<evidence type="ECO:0000305" key="10">
    <source>
    </source>
</evidence>
<accession>Q12524</accession>
<accession>D6VYE6</accession>
<proteinExistence type="evidence at protein level"/>
<dbReference type="EC" id="3.6.1.-"/>
<dbReference type="EC" id="3.6.1.77" evidence="3"/>
<dbReference type="EC" id="3.6.1.56" evidence="5"/>
<dbReference type="EMBL" id="Z73323">
    <property type="protein sequence ID" value="CAA97723.1"/>
    <property type="molecule type" value="Genomic_DNA"/>
</dbReference>
<dbReference type="EMBL" id="U53879">
    <property type="protein sequence ID" value="AAB82385.1"/>
    <property type="molecule type" value="Genomic_DNA"/>
</dbReference>
<dbReference type="EMBL" id="AY557953">
    <property type="protein sequence ID" value="AAS56279.1"/>
    <property type="molecule type" value="Genomic_DNA"/>
</dbReference>
<dbReference type="EMBL" id="BK006945">
    <property type="protein sequence ID" value="DAA09462.1"/>
    <property type="molecule type" value="Genomic_DNA"/>
</dbReference>
<dbReference type="PIR" id="S65000">
    <property type="entry name" value="S65000"/>
</dbReference>
<dbReference type="RefSeq" id="NP_013252.1">
    <property type="nucleotide sequence ID" value="NM_001182038.1"/>
</dbReference>
<dbReference type="BioGRID" id="31420">
    <property type="interactions" value="38"/>
</dbReference>
<dbReference type="DIP" id="DIP-4808N"/>
<dbReference type="FunCoup" id="Q12524">
    <property type="interactions" value="149"/>
</dbReference>
<dbReference type="STRING" id="4932.YLR151C"/>
<dbReference type="iPTMnet" id="Q12524"/>
<dbReference type="PaxDb" id="4932-YLR151C"/>
<dbReference type="PeptideAtlas" id="Q12524"/>
<dbReference type="EnsemblFungi" id="YLR151C_mRNA">
    <property type="protein sequence ID" value="YLR151C"/>
    <property type="gene ID" value="YLR151C"/>
</dbReference>
<dbReference type="GeneID" id="850844"/>
<dbReference type="KEGG" id="sce:YLR151C"/>
<dbReference type="AGR" id="SGD:S000004141"/>
<dbReference type="SGD" id="S000004141">
    <property type="gene designation" value="PCD1"/>
</dbReference>
<dbReference type="VEuPathDB" id="FungiDB:YLR151C"/>
<dbReference type="eggNOG" id="KOG3069">
    <property type="taxonomic scope" value="Eukaryota"/>
</dbReference>
<dbReference type="HOGENOM" id="CLU_040940_1_0_1"/>
<dbReference type="InParanoid" id="Q12524"/>
<dbReference type="OMA" id="WRMHHFF"/>
<dbReference type="OrthoDB" id="206213at2759"/>
<dbReference type="BioCyc" id="YEAST:YLR151C-MONOMER"/>
<dbReference type="Reactome" id="R-SCE-9033241">
    <property type="pathway name" value="Peroxisomal protein import"/>
</dbReference>
<dbReference type="SABIO-RK" id="Q12524"/>
<dbReference type="BioGRID-ORCS" id="850844">
    <property type="hits" value="0 hits in 10 CRISPR screens"/>
</dbReference>
<dbReference type="PRO" id="PR:Q12524"/>
<dbReference type="Proteomes" id="UP000002311">
    <property type="component" value="Chromosome XII"/>
</dbReference>
<dbReference type="RNAct" id="Q12524">
    <property type="molecule type" value="protein"/>
</dbReference>
<dbReference type="GO" id="GO:0005829">
    <property type="term" value="C:cytosol"/>
    <property type="evidence" value="ECO:0007005"/>
    <property type="project" value="SGD"/>
</dbReference>
<dbReference type="GO" id="GO:0005777">
    <property type="term" value="C:peroxisome"/>
    <property type="evidence" value="ECO:0000314"/>
    <property type="project" value="SGD"/>
</dbReference>
<dbReference type="GO" id="GO:0106378">
    <property type="term" value="F:2-hydroxy-dATP hydrolase activity"/>
    <property type="evidence" value="ECO:0007669"/>
    <property type="project" value="RHEA"/>
</dbReference>
<dbReference type="GO" id="GO:0035539">
    <property type="term" value="F:8-oxo-7,8-dihydrodeoxyguanosine triphosphate pyrophosphatase activity"/>
    <property type="evidence" value="ECO:0007669"/>
    <property type="project" value="UniProtKB-EC"/>
</dbReference>
<dbReference type="GO" id="GO:0008413">
    <property type="term" value="F:8-oxo-7,8-dihydroguanosine triphosphate pyrophosphatase activity"/>
    <property type="evidence" value="ECO:0000314"/>
    <property type="project" value="SGD"/>
</dbReference>
<dbReference type="GO" id="GO:0010945">
    <property type="term" value="F:coenzyme A diphosphatase activity"/>
    <property type="evidence" value="ECO:0000314"/>
    <property type="project" value="SGD"/>
</dbReference>
<dbReference type="GO" id="GO:0000287">
    <property type="term" value="F:magnesium ion binding"/>
    <property type="evidence" value="ECO:0007669"/>
    <property type="project" value="InterPro"/>
</dbReference>
<dbReference type="GO" id="GO:0030145">
    <property type="term" value="F:manganese ion binding"/>
    <property type="evidence" value="ECO:0007669"/>
    <property type="project" value="InterPro"/>
</dbReference>
<dbReference type="GO" id="GO:0015938">
    <property type="term" value="P:coenzyme A catabolic process"/>
    <property type="evidence" value="ECO:0000318"/>
    <property type="project" value="GO_Central"/>
</dbReference>
<dbReference type="GO" id="GO:0006281">
    <property type="term" value="P:DNA repair"/>
    <property type="evidence" value="ECO:0000315"/>
    <property type="project" value="SGD"/>
</dbReference>
<dbReference type="GO" id="GO:0009132">
    <property type="term" value="P:nucleoside diphosphate metabolic process"/>
    <property type="evidence" value="ECO:0007669"/>
    <property type="project" value="InterPro"/>
</dbReference>
<dbReference type="CDD" id="cd03426">
    <property type="entry name" value="NUDIX_CoAse_Nudt7"/>
    <property type="match status" value="1"/>
</dbReference>
<dbReference type="FunFam" id="3.90.79.10:FF:000053">
    <property type="entry name" value="Coenzyme A diphosphatase"/>
    <property type="match status" value="1"/>
</dbReference>
<dbReference type="Gene3D" id="3.90.79.10">
    <property type="entry name" value="Nucleoside Triphosphate Pyrophosphohydrolase"/>
    <property type="match status" value="1"/>
</dbReference>
<dbReference type="InterPro" id="IPR045121">
    <property type="entry name" value="CoAse"/>
</dbReference>
<dbReference type="InterPro" id="IPR015797">
    <property type="entry name" value="NUDIX_hydrolase-like_dom_sf"/>
</dbReference>
<dbReference type="InterPro" id="IPR000086">
    <property type="entry name" value="NUDIX_hydrolase_dom"/>
</dbReference>
<dbReference type="InterPro" id="IPR000059">
    <property type="entry name" value="NUDIX_hydrolase_NudL_CS"/>
</dbReference>
<dbReference type="PANTHER" id="PTHR12992">
    <property type="entry name" value="NUDIX HYDROLASE"/>
    <property type="match status" value="1"/>
</dbReference>
<dbReference type="PANTHER" id="PTHR12992:SF24">
    <property type="entry name" value="PEROXISOMAL COENZYME A DIPHOSPHATASE NUDT7"/>
    <property type="match status" value="1"/>
</dbReference>
<dbReference type="Pfam" id="PF00293">
    <property type="entry name" value="NUDIX"/>
    <property type="match status" value="1"/>
</dbReference>
<dbReference type="SUPFAM" id="SSF55811">
    <property type="entry name" value="Nudix"/>
    <property type="match status" value="1"/>
</dbReference>
<dbReference type="PROSITE" id="PS51462">
    <property type="entry name" value="NUDIX"/>
    <property type="match status" value="1"/>
</dbReference>
<dbReference type="PROSITE" id="PS01293">
    <property type="entry name" value="NUDIX_COA"/>
    <property type="match status" value="1"/>
</dbReference>
<protein>
    <recommendedName>
        <fullName evidence="6">Peroxisomal coenzyme A diphosphatase 1, peroxisomal</fullName>
        <shortName evidence="6">Pcd1p</shortName>
        <ecNumber>3.6.1.-</ecNumber>
        <ecNumber evidence="3">3.6.1.77</ecNumber>
    </recommendedName>
    <alternativeName>
        <fullName evidence="10">8-oxo-dGTP/2-hydroxy-dATP diphosphatase</fullName>
        <ecNumber evidence="5">3.6.1.56</ecNumber>
    </alternativeName>
</protein>
<reference key="1">
    <citation type="journal article" date="1997" name="Nature">
        <title>The nucleotide sequence of Saccharomyces cerevisiae chromosome XII.</title>
        <authorList>
            <person name="Johnston M."/>
            <person name="Hillier L.W."/>
            <person name="Riles L."/>
            <person name="Albermann K."/>
            <person name="Andre B."/>
            <person name="Ansorge W."/>
            <person name="Benes V."/>
            <person name="Brueckner M."/>
            <person name="Delius H."/>
            <person name="Dubois E."/>
            <person name="Duesterhoeft A."/>
            <person name="Entian K.-D."/>
            <person name="Floeth M."/>
            <person name="Goffeau A."/>
            <person name="Hebling U."/>
            <person name="Heumann K."/>
            <person name="Heuss-Neitzel D."/>
            <person name="Hilbert H."/>
            <person name="Hilger F."/>
            <person name="Kleine K."/>
            <person name="Koetter P."/>
            <person name="Louis E.J."/>
            <person name="Messenguy F."/>
            <person name="Mewes H.-W."/>
            <person name="Miosga T."/>
            <person name="Moestl D."/>
            <person name="Mueller-Auer S."/>
            <person name="Nentwich U."/>
            <person name="Obermaier B."/>
            <person name="Piravandi E."/>
            <person name="Pohl T.M."/>
            <person name="Portetelle D."/>
            <person name="Purnelle B."/>
            <person name="Rechmann S."/>
            <person name="Rieger M."/>
            <person name="Rinke M."/>
            <person name="Rose M."/>
            <person name="Scharfe M."/>
            <person name="Scherens B."/>
            <person name="Scholler P."/>
            <person name="Schwager C."/>
            <person name="Schwarz S."/>
            <person name="Underwood A.P."/>
            <person name="Urrestarazu L.A."/>
            <person name="Vandenbol M."/>
            <person name="Verhasselt P."/>
            <person name="Vierendeels F."/>
            <person name="Voet M."/>
            <person name="Volckaert G."/>
            <person name="Voss H."/>
            <person name="Wambutt R."/>
            <person name="Wedler E."/>
            <person name="Wedler H."/>
            <person name="Zimmermann F.K."/>
            <person name="Zollner A."/>
            <person name="Hani J."/>
            <person name="Hoheisel J.D."/>
        </authorList>
    </citation>
    <scope>NUCLEOTIDE SEQUENCE [LARGE SCALE GENOMIC DNA]</scope>
    <source>
        <strain>ATCC 204508 / S288c</strain>
    </source>
</reference>
<reference key="2">
    <citation type="journal article" date="2014" name="G3 (Bethesda)">
        <title>The reference genome sequence of Saccharomyces cerevisiae: Then and now.</title>
        <authorList>
            <person name="Engel S.R."/>
            <person name="Dietrich F.S."/>
            <person name="Fisk D.G."/>
            <person name="Binkley G."/>
            <person name="Balakrishnan R."/>
            <person name="Costanzo M.C."/>
            <person name="Dwight S.S."/>
            <person name="Hitz B.C."/>
            <person name="Karra K."/>
            <person name="Nash R.S."/>
            <person name="Weng S."/>
            <person name="Wong E.D."/>
            <person name="Lloyd P."/>
            <person name="Skrzypek M.S."/>
            <person name="Miyasato S.R."/>
            <person name="Simison M."/>
            <person name="Cherry J.M."/>
        </authorList>
    </citation>
    <scope>GENOME REANNOTATION</scope>
    <source>
        <strain>ATCC 204508 / S288c</strain>
    </source>
</reference>
<reference key="3">
    <citation type="journal article" date="2007" name="Genome Res.">
        <title>Approaching a complete repository of sequence-verified protein-encoding clones for Saccharomyces cerevisiae.</title>
        <authorList>
            <person name="Hu Y."/>
            <person name="Rolfs A."/>
            <person name="Bhullar B."/>
            <person name="Murthy T.V.S."/>
            <person name="Zhu C."/>
            <person name="Berger M.F."/>
            <person name="Camargo A.A."/>
            <person name="Kelley F."/>
            <person name="McCarron S."/>
            <person name="Jepson D."/>
            <person name="Richardson A."/>
            <person name="Raphael J."/>
            <person name="Moreira D."/>
            <person name="Taycher E."/>
            <person name="Zuo D."/>
            <person name="Mohr S."/>
            <person name="Kane M.F."/>
            <person name="Williamson J."/>
            <person name="Simpson A.J.G."/>
            <person name="Bulyk M.L."/>
            <person name="Harlow E."/>
            <person name="Marsischky G."/>
            <person name="Kolodner R.D."/>
            <person name="LaBaer J."/>
        </authorList>
    </citation>
    <scope>NUCLEOTIDE SEQUENCE [GENOMIC DNA]</scope>
    <source>
        <strain>ATCC 204508 / S288c</strain>
    </source>
</reference>
<reference key="4">
    <citation type="journal article" date="2000" name="J. Biol. Chem.">
        <title>The Saccharomyces cerevisiae PCD1 gene encodes a peroxisomal nudix hydrolase active toward coenzyme A and its derivatives.</title>
        <authorList>
            <person name="Cartwright J.L."/>
            <person name="Gasmi L."/>
            <person name="Spiller D.G."/>
            <person name="McLennan A.G."/>
        </authorList>
    </citation>
    <scope>PROTEIN SEQUENCE OF 8-15</scope>
    <scope>FUNCTION</scope>
    <scope>CATALYTIC ACTIVITY</scope>
    <scope>COFACTOR</scope>
    <scope>BIOPHYSICOCHEMICAL PROPERTIES</scope>
    <scope>SUBSTRATE SPECIFICITY</scope>
    <scope>SUBCELLULAR LOCATION</scope>
</reference>
<reference key="5">
    <citation type="journal article" date="2003" name="Nature">
        <title>Global analysis of protein expression in yeast.</title>
        <authorList>
            <person name="Ghaemmaghami S."/>
            <person name="Huh W.-K."/>
            <person name="Bower K."/>
            <person name="Howson R.W."/>
            <person name="Belle A."/>
            <person name="Dephoure N."/>
            <person name="O'Shea E.K."/>
            <person name="Weissman J.S."/>
        </authorList>
    </citation>
    <scope>LEVEL OF PROTEIN EXPRESSION [LARGE SCALE ANALYSIS]</scope>
</reference>
<reference key="6">
    <citation type="journal article" date="2004" name="Nucleic Acids Res.">
        <title>A novel Nudix hydrolase for oxidized purine nucleoside triphosphates encoded by ORFYLR151c (PCD1 gene) in Saccharomyces cerevisiae.</title>
        <authorList>
            <person name="Nunoshiba T."/>
            <person name="Ishida R."/>
            <person name="Sasaki M."/>
            <person name="Iwai S."/>
            <person name="Nakabeppu Y."/>
            <person name="Yamamoto K."/>
        </authorList>
    </citation>
    <scope>FUNCTION</scope>
    <scope>CATALYTIC ACTIVITY</scope>
    <scope>BIOPHYSICOCHEMICAL PROPERTIES</scope>
    <scope>DISRUPTION PHENOTYPE</scope>
</reference>
<keyword id="KW-0903">Direct protein sequencing</keyword>
<keyword id="KW-0378">Hydrolase</keyword>
<keyword id="KW-0460">Magnesium</keyword>
<keyword id="KW-0464">Manganese</keyword>
<keyword id="KW-0479">Metal-binding</keyword>
<keyword id="KW-0576">Peroxisome</keyword>
<keyword id="KW-1185">Reference proteome</keyword>
<keyword id="KW-0809">Transit peptide</keyword>
<feature type="transit peptide" description="Peroxisome" evidence="3">
    <location>
        <begin position="1"/>
        <end position="7"/>
    </location>
</feature>
<feature type="chain" id="PRO_0000036186" description="Peroxisomal coenzyme A diphosphatase 1, peroxisomal">
    <location>
        <begin position="8"/>
        <end position="340"/>
    </location>
</feature>
<feature type="domain" description="Nudix hydrolase" evidence="2">
    <location>
        <begin position="37"/>
        <end position="199"/>
    </location>
</feature>
<feature type="short sequence motif" description="Nudix box" evidence="7">
    <location>
        <begin position="77"/>
        <end position="99"/>
    </location>
</feature>
<feature type="binding site" evidence="1">
    <location>
        <position position="93"/>
    </location>
    <ligand>
        <name>Mg(2+)</name>
        <dbReference type="ChEBI" id="CHEBI:18420"/>
    </ligand>
</feature>
<feature type="binding site" evidence="1">
    <location>
        <position position="97"/>
    </location>
    <ligand>
        <name>Mg(2+)</name>
        <dbReference type="ChEBI" id="CHEBI:18420"/>
    </ligand>
</feature>
<name>PCD1_YEAST</name>
<organism>
    <name type="scientific">Saccharomyces cerevisiae (strain ATCC 204508 / S288c)</name>
    <name type="common">Baker's yeast</name>
    <dbReference type="NCBI Taxonomy" id="559292"/>
    <lineage>
        <taxon>Eukaryota</taxon>
        <taxon>Fungi</taxon>
        <taxon>Dikarya</taxon>
        <taxon>Ascomycota</taxon>
        <taxon>Saccharomycotina</taxon>
        <taxon>Saccharomycetes</taxon>
        <taxon>Saccharomycetales</taxon>
        <taxon>Saccharomycetaceae</taxon>
        <taxon>Saccharomyces</taxon>
    </lineage>
</organism>
<sequence length="340" mass="39755">MILSQRRMLSSKQLIENLIRYKFHKTPYTRSSIWPFKRNSAVIILLFIGMKGELRVLLTKRSRTLRSFSGDVSFPGGKADYFQETFESVARREAEEEIGLPHDPEVLHKEFGMKLDNLVMDMPCYLSRTFLSVKPMVCFLYKDKLEKHEDKYKVPLDIRKFFGKLNPGETSSLFSVPLNDLVIHLLPEADEDVKSYQAEYFERKEYKLNWGGIKWLIMHYHFHVANNNEMPWLQTIEDLSSSDEDGVDGGIFRFRDLWGLTCKILFDVSCIANGLMDEKLKGELGHEDLIVGLHDYGNQMQPNGRSEWEIGMINGDRNLKYSDVIPEYYMKHLLECRSLW</sequence>